<protein>
    <recommendedName>
        <fullName evidence="1">Ketol-acid reductoisomerase (NADP(+))</fullName>
        <shortName evidence="1">KARI</shortName>
        <ecNumber evidence="1">1.1.1.86</ecNumber>
    </recommendedName>
    <alternativeName>
        <fullName evidence="1">Acetohydroxy-acid isomeroreductase</fullName>
        <shortName evidence="1">AHIR</shortName>
    </alternativeName>
    <alternativeName>
        <fullName evidence="1">Alpha-keto-beta-hydroxylacyl reductoisomerase</fullName>
    </alternativeName>
    <alternativeName>
        <fullName evidence="1">Ketol-acid reductoisomerase type 1</fullName>
    </alternativeName>
    <alternativeName>
        <fullName evidence="1">Ketol-acid reductoisomerase type I</fullName>
    </alternativeName>
</protein>
<feature type="chain" id="PRO_1000190973" description="Ketol-acid reductoisomerase (NADP(+))">
    <location>
        <begin position="1"/>
        <end position="338"/>
    </location>
</feature>
<feature type="domain" description="KARI N-terminal Rossmann" evidence="2">
    <location>
        <begin position="1"/>
        <end position="181"/>
    </location>
</feature>
<feature type="domain" description="KARI C-terminal knotted" evidence="3">
    <location>
        <begin position="182"/>
        <end position="327"/>
    </location>
</feature>
<feature type="active site" evidence="1">
    <location>
        <position position="107"/>
    </location>
</feature>
<feature type="binding site" evidence="1">
    <location>
        <begin position="24"/>
        <end position="27"/>
    </location>
    <ligand>
        <name>NADP(+)</name>
        <dbReference type="ChEBI" id="CHEBI:58349"/>
    </ligand>
</feature>
<feature type="binding site" evidence="1">
    <location>
        <position position="47"/>
    </location>
    <ligand>
        <name>NADP(+)</name>
        <dbReference type="ChEBI" id="CHEBI:58349"/>
    </ligand>
</feature>
<feature type="binding site" evidence="1">
    <location>
        <position position="52"/>
    </location>
    <ligand>
        <name>NADP(+)</name>
        <dbReference type="ChEBI" id="CHEBI:58349"/>
    </ligand>
</feature>
<feature type="binding site" evidence="1">
    <location>
        <begin position="82"/>
        <end position="85"/>
    </location>
    <ligand>
        <name>NADP(+)</name>
        <dbReference type="ChEBI" id="CHEBI:58349"/>
    </ligand>
</feature>
<feature type="binding site" evidence="1">
    <location>
        <position position="133"/>
    </location>
    <ligand>
        <name>NADP(+)</name>
        <dbReference type="ChEBI" id="CHEBI:58349"/>
    </ligand>
</feature>
<feature type="binding site" evidence="1">
    <location>
        <position position="190"/>
    </location>
    <ligand>
        <name>Mg(2+)</name>
        <dbReference type="ChEBI" id="CHEBI:18420"/>
        <label>1</label>
    </ligand>
</feature>
<feature type="binding site" evidence="1">
    <location>
        <position position="190"/>
    </location>
    <ligand>
        <name>Mg(2+)</name>
        <dbReference type="ChEBI" id="CHEBI:18420"/>
        <label>2</label>
    </ligand>
</feature>
<feature type="binding site" evidence="1">
    <location>
        <position position="194"/>
    </location>
    <ligand>
        <name>Mg(2+)</name>
        <dbReference type="ChEBI" id="CHEBI:18420"/>
        <label>1</label>
    </ligand>
</feature>
<feature type="binding site" evidence="1">
    <location>
        <position position="226"/>
    </location>
    <ligand>
        <name>Mg(2+)</name>
        <dbReference type="ChEBI" id="CHEBI:18420"/>
        <label>2</label>
    </ligand>
</feature>
<feature type="binding site" evidence="1">
    <location>
        <position position="230"/>
    </location>
    <ligand>
        <name>Mg(2+)</name>
        <dbReference type="ChEBI" id="CHEBI:18420"/>
        <label>2</label>
    </ligand>
</feature>
<feature type="binding site" evidence="1">
    <location>
        <position position="251"/>
    </location>
    <ligand>
        <name>substrate</name>
    </ligand>
</feature>
<dbReference type="EC" id="1.1.1.86" evidence="1"/>
<dbReference type="EMBL" id="CP001154">
    <property type="protein sequence ID" value="ACO73154.1"/>
    <property type="molecule type" value="Genomic_DNA"/>
</dbReference>
<dbReference type="RefSeq" id="WP_012695649.1">
    <property type="nucleotide sequence ID" value="NC_012559.1"/>
</dbReference>
<dbReference type="SMR" id="C1DA41"/>
<dbReference type="STRING" id="557598.LHK_00158"/>
<dbReference type="GeneID" id="75109570"/>
<dbReference type="KEGG" id="lhk:LHK_00158"/>
<dbReference type="eggNOG" id="COG0059">
    <property type="taxonomic scope" value="Bacteria"/>
</dbReference>
<dbReference type="HOGENOM" id="CLU_033821_0_1_4"/>
<dbReference type="UniPathway" id="UPA00047">
    <property type="reaction ID" value="UER00056"/>
</dbReference>
<dbReference type="UniPathway" id="UPA00049">
    <property type="reaction ID" value="UER00060"/>
</dbReference>
<dbReference type="Proteomes" id="UP000002010">
    <property type="component" value="Chromosome"/>
</dbReference>
<dbReference type="GO" id="GO:0005829">
    <property type="term" value="C:cytosol"/>
    <property type="evidence" value="ECO:0007669"/>
    <property type="project" value="TreeGrafter"/>
</dbReference>
<dbReference type="GO" id="GO:0004455">
    <property type="term" value="F:ketol-acid reductoisomerase activity"/>
    <property type="evidence" value="ECO:0007669"/>
    <property type="project" value="UniProtKB-UniRule"/>
</dbReference>
<dbReference type="GO" id="GO:0000287">
    <property type="term" value="F:magnesium ion binding"/>
    <property type="evidence" value="ECO:0007669"/>
    <property type="project" value="UniProtKB-UniRule"/>
</dbReference>
<dbReference type="GO" id="GO:0050661">
    <property type="term" value="F:NADP binding"/>
    <property type="evidence" value="ECO:0007669"/>
    <property type="project" value="InterPro"/>
</dbReference>
<dbReference type="GO" id="GO:0009097">
    <property type="term" value="P:isoleucine biosynthetic process"/>
    <property type="evidence" value="ECO:0007669"/>
    <property type="project" value="UniProtKB-UniRule"/>
</dbReference>
<dbReference type="GO" id="GO:0009099">
    <property type="term" value="P:L-valine biosynthetic process"/>
    <property type="evidence" value="ECO:0007669"/>
    <property type="project" value="UniProtKB-UniRule"/>
</dbReference>
<dbReference type="FunFam" id="3.40.50.720:FF:000023">
    <property type="entry name" value="Ketol-acid reductoisomerase (NADP(+))"/>
    <property type="match status" value="1"/>
</dbReference>
<dbReference type="Gene3D" id="6.10.240.10">
    <property type="match status" value="1"/>
</dbReference>
<dbReference type="Gene3D" id="3.40.50.720">
    <property type="entry name" value="NAD(P)-binding Rossmann-like Domain"/>
    <property type="match status" value="1"/>
</dbReference>
<dbReference type="HAMAP" id="MF_00435">
    <property type="entry name" value="IlvC"/>
    <property type="match status" value="1"/>
</dbReference>
<dbReference type="InterPro" id="IPR008927">
    <property type="entry name" value="6-PGluconate_DH-like_C_sf"/>
</dbReference>
<dbReference type="InterPro" id="IPR013023">
    <property type="entry name" value="KARI"/>
</dbReference>
<dbReference type="InterPro" id="IPR000506">
    <property type="entry name" value="KARI_C"/>
</dbReference>
<dbReference type="InterPro" id="IPR013116">
    <property type="entry name" value="KARI_N"/>
</dbReference>
<dbReference type="InterPro" id="IPR014359">
    <property type="entry name" value="KARI_prok"/>
</dbReference>
<dbReference type="InterPro" id="IPR036291">
    <property type="entry name" value="NAD(P)-bd_dom_sf"/>
</dbReference>
<dbReference type="NCBIfam" id="TIGR00465">
    <property type="entry name" value="ilvC"/>
    <property type="match status" value="1"/>
</dbReference>
<dbReference type="NCBIfam" id="NF004017">
    <property type="entry name" value="PRK05479.1"/>
    <property type="match status" value="1"/>
</dbReference>
<dbReference type="NCBIfam" id="NF009940">
    <property type="entry name" value="PRK13403.1"/>
    <property type="match status" value="1"/>
</dbReference>
<dbReference type="PANTHER" id="PTHR21371">
    <property type="entry name" value="KETOL-ACID REDUCTOISOMERASE, MITOCHONDRIAL"/>
    <property type="match status" value="1"/>
</dbReference>
<dbReference type="PANTHER" id="PTHR21371:SF1">
    <property type="entry name" value="KETOL-ACID REDUCTOISOMERASE, MITOCHONDRIAL"/>
    <property type="match status" value="1"/>
</dbReference>
<dbReference type="Pfam" id="PF01450">
    <property type="entry name" value="KARI_C"/>
    <property type="match status" value="1"/>
</dbReference>
<dbReference type="Pfam" id="PF07991">
    <property type="entry name" value="KARI_N"/>
    <property type="match status" value="1"/>
</dbReference>
<dbReference type="PIRSF" id="PIRSF000116">
    <property type="entry name" value="IlvC_gammaproteo"/>
    <property type="match status" value="1"/>
</dbReference>
<dbReference type="SUPFAM" id="SSF48179">
    <property type="entry name" value="6-phosphogluconate dehydrogenase C-terminal domain-like"/>
    <property type="match status" value="1"/>
</dbReference>
<dbReference type="SUPFAM" id="SSF51735">
    <property type="entry name" value="NAD(P)-binding Rossmann-fold domains"/>
    <property type="match status" value="1"/>
</dbReference>
<dbReference type="PROSITE" id="PS51851">
    <property type="entry name" value="KARI_C"/>
    <property type="match status" value="1"/>
</dbReference>
<dbReference type="PROSITE" id="PS51850">
    <property type="entry name" value="KARI_N"/>
    <property type="match status" value="1"/>
</dbReference>
<gene>
    <name evidence="1" type="primary">ilvC</name>
    <name type="ordered locus">LHK_00158</name>
</gene>
<accession>C1DA41</accession>
<organism>
    <name type="scientific">Laribacter hongkongensis (strain HLHK9)</name>
    <dbReference type="NCBI Taxonomy" id="557598"/>
    <lineage>
        <taxon>Bacteria</taxon>
        <taxon>Pseudomonadati</taxon>
        <taxon>Pseudomonadota</taxon>
        <taxon>Betaproteobacteria</taxon>
        <taxon>Neisseriales</taxon>
        <taxon>Aquaspirillaceae</taxon>
        <taxon>Laribacter</taxon>
    </lineage>
</organism>
<evidence type="ECO:0000255" key="1">
    <source>
        <dbReference type="HAMAP-Rule" id="MF_00435"/>
    </source>
</evidence>
<evidence type="ECO:0000255" key="2">
    <source>
        <dbReference type="PROSITE-ProRule" id="PRU01197"/>
    </source>
</evidence>
<evidence type="ECO:0000255" key="3">
    <source>
        <dbReference type="PROSITE-ProRule" id="PRU01198"/>
    </source>
</evidence>
<reference key="1">
    <citation type="journal article" date="2009" name="PLoS Genet.">
        <title>The complete genome and proteome of Laribacter hongkongensis reveal potential mechanisms for adaptations to different temperatures and habitats.</title>
        <authorList>
            <person name="Woo P.C.Y."/>
            <person name="Lau S.K.P."/>
            <person name="Tse H."/>
            <person name="Teng J.L.L."/>
            <person name="Curreem S.O."/>
            <person name="Tsang A.K.L."/>
            <person name="Fan R.Y.Y."/>
            <person name="Wong G.K.M."/>
            <person name="Huang Y."/>
            <person name="Loman N.J."/>
            <person name="Snyder L.A.S."/>
            <person name="Cai J.J."/>
            <person name="Huang J.-D."/>
            <person name="Mak W."/>
            <person name="Pallen M.J."/>
            <person name="Lok S."/>
            <person name="Yuen K.-Y."/>
        </authorList>
    </citation>
    <scope>NUCLEOTIDE SEQUENCE [LARGE SCALE GENOMIC DNA]</scope>
    <source>
        <strain>HLHK9</strain>
    </source>
</reference>
<comment type="function">
    <text evidence="1">Involved in the biosynthesis of branched-chain amino acids (BCAA). Catalyzes an alkyl-migration followed by a ketol-acid reduction of (S)-2-acetolactate (S2AL) to yield (R)-2,3-dihydroxy-isovalerate. In the isomerase reaction, S2AL is rearranged via a Mg-dependent methyl migration to produce 3-hydroxy-3-methyl-2-ketobutyrate (HMKB). In the reductase reaction, this 2-ketoacid undergoes a metal-dependent reduction by NADPH to yield (R)-2,3-dihydroxy-isovalerate.</text>
</comment>
<comment type="catalytic activity">
    <reaction evidence="1">
        <text>(2R)-2,3-dihydroxy-3-methylbutanoate + NADP(+) = (2S)-2-acetolactate + NADPH + H(+)</text>
        <dbReference type="Rhea" id="RHEA:22068"/>
        <dbReference type="ChEBI" id="CHEBI:15378"/>
        <dbReference type="ChEBI" id="CHEBI:49072"/>
        <dbReference type="ChEBI" id="CHEBI:57783"/>
        <dbReference type="ChEBI" id="CHEBI:58349"/>
        <dbReference type="ChEBI" id="CHEBI:58476"/>
        <dbReference type="EC" id="1.1.1.86"/>
    </reaction>
</comment>
<comment type="catalytic activity">
    <reaction evidence="1">
        <text>(2R,3R)-2,3-dihydroxy-3-methylpentanoate + NADP(+) = (S)-2-ethyl-2-hydroxy-3-oxobutanoate + NADPH + H(+)</text>
        <dbReference type="Rhea" id="RHEA:13493"/>
        <dbReference type="ChEBI" id="CHEBI:15378"/>
        <dbReference type="ChEBI" id="CHEBI:49256"/>
        <dbReference type="ChEBI" id="CHEBI:49258"/>
        <dbReference type="ChEBI" id="CHEBI:57783"/>
        <dbReference type="ChEBI" id="CHEBI:58349"/>
        <dbReference type="EC" id="1.1.1.86"/>
    </reaction>
</comment>
<comment type="cofactor">
    <cofactor evidence="1">
        <name>Mg(2+)</name>
        <dbReference type="ChEBI" id="CHEBI:18420"/>
    </cofactor>
    <text evidence="1">Binds 2 magnesium ions per subunit.</text>
</comment>
<comment type="pathway">
    <text evidence="1">Amino-acid biosynthesis; L-isoleucine biosynthesis; L-isoleucine from 2-oxobutanoate: step 2/4.</text>
</comment>
<comment type="pathway">
    <text evidence="1">Amino-acid biosynthesis; L-valine biosynthesis; L-valine from pyruvate: step 2/4.</text>
</comment>
<comment type="similarity">
    <text evidence="1">Belongs to the ketol-acid reductoisomerase family.</text>
</comment>
<keyword id="KW-0028">Amino-acid biosynthesis</keyword>
<keyword id="KW-0100">Branched-chain amino acid biosynthesis</keyword>
<keyword id="KW-0460">Magnesium</keyword>
<keyword id="KW-0479">Metal-binding</keyword>
<keyword id="KW-0521">NADP</keyword>
<keyword id="KW-0560">Oxidoreductase</keyword>
<keyword id="KW-1185">Reference proteome</keyword>
<proteinExistence type="inferred from homology"/>
<sequence>MKVYYDKDADLSIIRDKKVAIIGYGSQGHAHAQNLKESGVDVIVGLRKDGASWKKAEAAGHTVKEVGEAVKTADVVMILLPDETQPDVYRNDIAPNLKKGAALAFAHGFNIHYNQIVPPADIDVIMIAPKGPGHTVRSEFLKGGGVPSLIAVYQDHSGRARDVALSYAAANGGTKGGVIETSFREETETDLFGEQAVLCGGAVELVKAGFETLTEAGYAPEMAYFECLHELKLIVDLMYEGGIANMNYSISNNAEYGEYVTGPEVITAASKEAMKKALYRIQSGEYAKMFILEGKTNYPSMTARRRLTADHPIEKVGAELRAMMPWIAKNKLVDQSKN</sequence>
<name>ILVC_LARHH</name>